<name>LOXL3_MOUSE</name>
<reference key="1">
    <citation type="journal article" date="1999" name="Genome Res.">
        <title>Comparative sequence of human and mouse BAC clones from the mnd2 region of chromosome 2p13.</title>
        <authorList>
            <person name="Jang W."/>
            <person name="Hua A."/>
            <person name="Spilson S.V."/>
            <person name="Miller W."/>
            <person name="Roe B.A."/>
            <person name="Meisler M.H."/>
        </authorList>
    </citation>
    <scope>NUCLEOTIDE SEQUENCE [GENOMIC DNA / MRNA]</scope>
    <source>
        <strain>129/SvJ</strain>
        <strain>C57BL/6J</strain>
        <tissue>Muscle</tissue>
    </source>
</reference>
<reference key="2">
    <citation type="journal article" date="2005" name="Science">
        <title>The transcriptional landscape of the mammalian genome.</title>
        <authorList>
            <person name="Carninci P."/>
            <person name="Kasukawa T."/>
            <person name="Katayama S."/>
            <person name="Gough J."/>
            <person name="Frith M.C."/>
            <person name="Maeda N."/>
            <person name="Oyama R."/>
            <person name="Ravasi T."/>
            <person name="Lenhard B."/>
            <person name="Wells C."/>
            <person name="Kodzius R."/>
            <person name="Shimokawa K."/>
            <person name="Bajic V.B."/>
            <person name="Brenner S.E."/>
            <person name="Batalov S."/>
            <person name="Forrest A.R."/>
            <person name="Zavolan M."/>
            <person name="Davis M.J."/>
            <person name="Wilming L.G."/>
            <person name="Aidinis V."/>
            <person name="Allen J.E."/>
            <person name="Ambesi-Impiombato A."/>
            <person name="Apweiler R."/>
            <person name="Aturaliya R.N."/>
            <person name="Bailey T.L."/>
            <person name="Bansal M."/>
            <person name="Baxter L."/>
            <person name="Beisel K.W."/>
            <person name="Bersano T."/>
            <person name="Bono H."/>
            <person name="Chalk A.M."/>
            <person name="Chiu K.P."/>
            <person name="Choudhary V."/>
            <person name="Christoffels A."/>
            <person name="Clutterbuck D.R."/>
            <person name="Crowe M.L."/>
            <person name="Dalla E."/>
            <person name="Dalrymple B.P."/>
            <person name="de Bono B."/>
            <person name="Della Gatta G."/>
            <person name="di Bernardo D."/>
            <person name="Down T."/>
            <person name="Engstrom P."/>
            <person name="Fagiolini M."/>
            <person name="Faulkner G."/>
            <person name="Fletcher C.F."/>
            <person name="Fukushima T."/>
            <person name="Furuno M."/>
            <person name="Futaki S."/>
            <person name="Gariboldi M."/>
            <person name="Georgii-Hemming P."/>
            <person name="Gingeras T.R."/>
            <person name="Gojobori T."/>
            <person name="Green R.E."/>
            <person name="Gustincich S."/>
            <person name="Harbers M."/>
            <person name="Hayashi Y."/>
            <person name="Hensch T.K."/>
            <person name="Hirokawa N."/>
            <person name="Hill D."/>
            <person name="Huminiecki L."/>
            <person name="Iacono M."/>
            <person name="Ikeo K."/>
            <person name="Iwama A."/>
            <person name="Ishikawa T."/>
            <person name="Jakt M."/>
            <person name="Kanapin A."/>
            <person name="Katoh M."/>
            <person name="Kawasawa Y."/>
            <person name="Kelso J."/>
            <person name="Kitamura H."/>
            <person name="Kitano H."/>
            <person name="Kollias G."/>
            <person name="Krishnan S.P."/>
            <person name="Kruger A."/>
            <person name="Kummerfeld S.K."/>
            <person name="Kurochkin I.V."/>
            <person name="Lareau L.F."/>
            <person name="Lazarevic D."/>
            <person name="Lipovich L."/>
            <person name="Liu J."/>
            <person name="Liuni S."/>
            <person name="McWilliam S."/>
            <person name="Madan Babu M."/>
            <person name="Madera M."/>
            <person name="Marchionni L."/>
            <person name="Matsuda H."/>
            <person name="Matsuzawa S."/>
            <person name="Miki H."/>
            <person name="Mignone F."/>
            <person name="Miyake S."/>
            <person name="Morris K."/>
            <person name="Mottagui-Tabar S."/>
            <person name="Mulder N."/>
            <person name="Nakano N."/>
            <person name="Nakauchi H."/>
            <person name="Ng P."/>
            <person name="Nilsson R."/>
            <person name="Nishiguchi S."/>
            <person name="Nishikawa S."/>
            <person name="Nori F."/>
            <person name="Ohara O."/>
            <person name="Okazaki Y."/>
            <person name="Orlando V."/>
            <person name="Pang K.C."/>
            <person name="Pavan W.J."/>
            <person name="Pavesi G."/>
            <person name="Pesole G."/>
            <person name="Petrovsky N."/>
            <person name="Piazza S."/>
            <person name="Reed J."/>
            <person name="Reid J.F."/>
            <person name="Ring B.Z."/>
            <person name="Ringwald M."/>
            <person name="Rost B."/>
            <person name="Ruan Y."/>
            <person name="Salzberg S.L."/>
            <person name="Sandelin A."/>
            <person name="Schneider C."/>
            <person name="Schoenbach C."/>
            <person name="Sekiguchi K."/>
            <person name="Semple C.A."/>
            <person name="Seno S."/>
            <person name="Sessa L."/>
            <person name="Sheng Y."/>
            <person name="Shibata Y."/>
            <person name="Shimada H."/>
            <person name="Shimada K."/>
            <person name="Silva D."/>
            <person name="Sinclair B."/>
            <person name="Sperling S."/>
            <person name="Stupka E."/>
            <person name="Sugiura K."/>
            <person name="Sultana R."/>
            <person name="Takenaka Y."/>
            <person name="Taki K."/>
            <person name="Tammoja K."/>
            <person name="Tan S.L."/>
            <person name="Tang S."/>
            <person name="Taylor M.S."/>
            <person name="Tegner J."/>
            <person name="Teichmann S.A."/>
            <person name="Ueda H.R."/>
            <person name="van Nimwegen E."/>
            <person name="Verardo R."/>
            <person name="Wei C.L."/>
            <person name="Yagi K."/>
            <person name="Yamanishi H."/>
            <person name="Zabarovsky E."/>
            <person name="Zhu S."/>
            <person name="Zimmer A."/>
            <person name="Hide W."/>
            <person name="Bult C."/>
            <person name="Grimmond S.M."/>
            <person name="Teasdale R.D."/>
            <person name="Liu E.T."/>
            <person name="Brusic V."/>
            <person name="Quackenbush J."/>
            <person name="Wahlestedt C."/>
            <person name="Mattick J.S."/>
            <person name="Hume D.A."/>
            <person name="Kai C."/>
            <person name="Sasaki D."/>
            <person name="Tomaru Y."/>
            <person name="Fukuda S."/>
            <person name="Kanamori-Katayama M."/>
            <person name="Suzuki M."/>
            <person name="Aoki J."/>
            <person name="Arakawa T."/>
            <person name="Iida J."/>
            <person name="Imamura K."/>
            <person name="Itoh M."/>
            <person name="Kato T."/>
            <person name="Kawaji H."/>
            <person name="Kawagashira N."/>
            <person name="Kawashima T."/>
            <person name="Kojima M."/>
            <person name="Kondo S."/>
            <person name="Konno H."/>
            <person name="Nakano K."/>
            <person name="Ninomiya N."/>
            <person name="Nishio T."/>
            <person name="Okada M."/>
            <person name="Plessy C."/>
            <person name="Shibata K."/>
            <person name="Shiraki T."/>
            <person name="Suzuki S."/>
            <person name="Tagami M."/>
            <person name="Waki K."/>
            <person name="Watahiki A."/>
            <person name="Okamura-Oho Y."/>
            <person name="Suzuki H."/>
            <person name="Kawai J."/>
            <person name="Hayashizaki Y."/>
        </authorList>
    </citation>
    <scope>NUCLEOTIDE SEQUENCE [LARGE SCALE MRNA]</scope>
    <source>
        <strain>C57BL/6J</strain>
        <tissue>Pituitary</tissue>
    </source>
</reference>
<reference key="3">
    <citation type="submission" date="2005-07" db="EMBL/GenBank/DDBJ databases">
        <authorList>
            <person name="Mural R.J."/>
            <person name="Adams M.D."/>
            <person name="Myers E.W."/>
            <person name="Smith H.O."/>
            <person name="Venter J.C."/>
        </authorList>
    </citation>
    <scope>NUCLEOTIDE SEQUENCE [LARGE SCALE GENOMIC DNA]</scope>
</reference>
<reference key="4">
    <citation type="journal article" date="2004" name="Genome Res.">
        <title>The status, quality, and expansion of the NIH full-length cDNA project: the Mammalian Gene Collection (MGC).</title>
        <authorList>
            <consortium name="The MGC Project Team"/>
        </authorList>
    </citation>
    <scope>NUCLEOTIDE SEQUENCE [LARGE SCALE MRNA]</scope>
    <source>
        <strain>FVB/N</strain>
        <tissue>Mammary tumor</tissue>
    </source>
</reference>
<reference key="5">
    <citation type="journal article" date="2015" name="Hum. Mol. Genet.">
        <title>Loss of lysyl oxidase-like 3 causes cleft palate and spinal deformity in mice.</title>
        <authorList>
            <person name="Zhang J."/>
            <person name="Yang R."/>
            <person name="Liu Z."/>
            <person name="Hou C."/>
            <person name="Zong W."/>
            <person name="Zhang A."/>
            <person name="Sun X."/>
            <person name="Gao J."/>
        </authorList>
    </citation>
    <scope>FUNCTION</scope>
    <scope>DISRUPTION PHENOTYPE</scope>
    <scope>TISSUE SPECIFICITY</scope>
</reference>
<reference key="6">
    <citation type="journal article" date="2016" name="Dev. Cell">
        <title>Localized LoxL3-dependent fibronectin oxidation regulates myofiber stretch and integrin-mediated adhesion.</title>
        <authorList>
            <person name="Kraft-Sheleg O."/>
            <person name="Zaffryar-Eilot S."/>
            <person name="Genin O."/>
            <person name="Yaseen W."/>
            <person name="Soueid-Baumgarten S."/>
            <person name="Kessler O."/>
            <person name="Smolkin T."/>
            <person name="Akiri G."/>
            <person name="Neufeld G."/>
            <person name="Cinnamon Y."/>
            <person name="Hasson P."/>
        </authorList>
    </citation>
    <scope>FUNCTION</scope>
    <scope>SUBCELLULAR LOCATION</scope>
    <scope>TISSUE SPECIFICITY</scope>
    <scope>DISRUPTION PHENOTYPE</scope>
</reference>
<reference key="7">
    <citation type="journal article" date="2017" name="Mol. Cell">
        <title>Lysyl oxidase 3 is a dual-specificity enzyme involved in STAT3 deacetylation and deacetylimination modulation.</title>
        <authorList>
            <person name="Ma L."/>
            <person name="Huang C."/>
            <person name="Wang X.J."/>
            <person name="Xin D.E."/>
            <person name="Wang L.S."/>
            <person name="Zou Q.C."/>
            <person name="Zhang Y.S."/>
            <person name="Tan M.D."/>
            <person name="Wang Y.M."/>
            <person name="Zhao T.C."/>
            <person name="Chatterjee D."/>
            <person name="Altura R.A."/>
            <person name="Wang C."/>
            <person name="Xu Y.S."/>
            <person name="Yang J.H."/>
            <person name="Fan Y.S."/>
            <person name="Han B.H."/>
            <person name="Si J."/>
            <person name="Zhang X."/>
            <person name="Cheng J."/>
            <person name="Chang Z."/>
            <person name="Chin Y.E."/>
        </authorList>
    </citation>
    <scope>FUNCTION</scope>
    <scope>DISRUPTION PHENOTYPE</scope>
</reference>
<reference key="8">
    <citation type="journal article" date="2016" name="Sci. Rep.">
        <title>Loss of lysyl oxidase-like 3 attenuates embryonic lung development in mice.</title>
        <authorList>
            <person name="Zhang J."/>
            <person name="Liu Z."/>
            <person name="Zhang T."/>
            <person name="Lin Z."/>
            <person name="Li Z."/>
            <person name="Zhang A."/>
            <person name="Sun X."/>
            <person name="Gao J."/>
        </authorList>
    </citation>
    <scope>DISRUPTION PHENOTYPE</scope>
    <scope>TISSUE SPECIFICITY</scope>
</reference>
<gene>
    <name evidence="13" type="primary">Loxl3</name>
    <name evidence="11" type="synonym">Lor2</name>
</gene>
<dbReference type="EC" id="1.4.3.-" evidence="3"/>
<dbReference type="EC" id="1.4.3.13" evidence="3"/>
<dbReference type="EMBL" id="AF053368">
    <property type="protein sequence ID" value="AAC83205.1"/>
    <property type="molecule type" value="mRNA"/>
</dbReference>
<dbReference type="EMBL" id="AF084363">
    <property type="protein sequence ID" value="AAC95338.1"/>
    <property type="molecule type" value="Genomic_DNA"/>
</dbReference>
<dbReference type="EMBL" id="AK030548">
    <property type="protein sequence ID" value="BAC27016.1"/>
    <property type="molecule type" value="mRNA"/>
</dbReference>
<dbReference type="EMBL" id="CH466523">
    <property type="protein sequence ID" value="EDK99047.1"/>
    <property type="molecule type" value="Genomic_DNA"/>
</dbReference>
<dbReference type="EMBL" id="BC011298">
    <property type="protein sequence ID" value="AAH11298.1"/>
    <property type="molecule type" value="mRNA"/>
</dbReference>
<dbReference type="CCDS" id="CCDS20266.1"/>
<dbReference type="RefSeq" id="NP_038614.2">
    <property type="nucleotide sequence ID" value="NM_013586.4"/>
</dbReference>
<dbReference type="SMR" id="Q9Z175"/>
<dbReference type="BioGRID" id="201193">
    <property type="interactions" value="5"/>
</dbReference>
<dbReference type="FunCoup" id="Q9Z175">
    <property type="interactions" value="648"/>
</dbReference>
<dbReference type="IntAct" id="Q9Z175">
    <property type="interactions" value="4"/>
</dbReference>
<dbReference type="MINT" id="Q9Z175"/>
<dbReference type="STRING" id="10090.ENSMUSP00000000707"/>
<dbReference type="GlyCosmos" id="Q9Z175">
    <property type="glycosylation" value="5 sites, No reported glycans"/>
</dbReference>
<dbReference type="GlyGen" id="Q9Z175">
    <property type="glycosylation" value="5 sites, 1 N-linked glycan (1 site)"/>
</dbReference>
<dbReference type="PhosphoSitePlus" id="Q9Z175"/>
<dbReference type="jPOST" id="Q9Z175"/>
<dbReference type="PaxDb" id="10090-ENSMUSP00000000707"/>
<dbReference type="PeptideAtlas" id="Q9Z175"/>
<dbReference type="ProteomicsDB" id="287257"/>
<dbReference type="Pumba" id="Q9Z175"/>
<dbReference type="Antibodypedia" id="31582">
    <property type="antibodies" value="175 antibodies from 22 providers"/>
</dbReference>
<dbReference type="DNASU" id="16950"/>
<dbReference type="Ensembl" id="ENSMUST00000000707.9">
    <property type="protein sequence ID" value="ENSMUSP00000000707.3"/>
    <property type="gene ID" value="ENSMUSG00000000693.11"/>
</dbReference>
<dbReference type="GeneID" id="16950"/>
<dbReference type="KEGG" id="mmu:16950"/>
<dbReference type="UCSC" id="uc009clt.1">
    <property type="organism name" value="mouse"/>
</dbReference>
<dbReference type="AGR" id="MGI:1337004"/>
<dbReference type="CTD" id="84695"/>
<dbReference type="MGI" id="MGI:1337004">
    <property type="gene designation" value="Loxl3"/>
</dbReference>
<dbReference type="VEuPathDB" id="HostDB:ENSMUSG00000000693"/>
<dbReference type="eggNOG" id="ENOG502QSX8">
    <property type="taxonomic scope" value="Eukaryota"/>
</dbReference>
<dbReference type="GeneTree" id="ENSGT00940000158157"/>
<dbReference type="HOGENOM" id="CLU_002555_3_0_1"/>
<dbReference type="InParanoid" id="Q9Z175"/>
<dbReference type="OMA" id="HWGLICG"/>
<dbReference type="OrthoDB" id="2467at9989"/>
<dbReference type="PhylomeDB" id="Q9Z175"/>
<dbReference type="TreeFam" id="TF326061"/>
<dbReference type="Reactome" id="R-MMU-1566948">
    <property type="pathway name" value="Elastic fibre formation"/>
</dbReference>
<dbReference type="Reactome" id="R-MMU-2243919">
    <property type="pathway name" value="Crosslinking of collagen fibrils"/>
</dbReference>
<dbReference type="BioGRID-ORCS" id="16950">
    <property type="hits" value="3 hits in 76 CRISPR screens"/>
</dbReference>
<dbReference type="PRO" id="PR:Q9Z175"/>
<dbReference type="Proteomes" id="UP000000589">
    <property type="component" value="Chromosome 6"/>
</dbReference>
<dbReference type="RNAct" id="Q9Z175">
    <property type="molecule type" value="protein"/>
</dbReference>
<dbReference type="Bgee" id="ENSMUSG00000000693">
    <property type="expression patterns" value="Expressed in occipital region and 102 other cell types or tissues"/>
</dbReference>
<dbReference type="ExpressionAtlas" id="Q9Z175">
    <property type="expression patterns" value="baseline and differential"/>
</dbReference>
<dbReference type="GO" id="GO:0005737">
    <property type="term" value="C:cytoplasm"/>
    <property type="evidence" value="ECO:0000250"/>
    <property type="project" value="UniProtKB"/>
</dbReference>
<dbReference type="GO" id="GO:0005615">
    <property type="term" value="C:extracellular space"/>
    <property type="evidence" value="ECO:0000314"/>
    <property type="project" value="UniProtKB"/>
</dbReference>
<dbReference type="GO" id="GO:0016020">
    <property type="term" value="C:membrane"/>
    <property type="evidence" value="ECO:0007669"/>
    <property type="project" value="InterPro"/>
</dbReference>
<dbReference type="GO" id="GO:0005634">
    <property type="term" value="C:nucleus"/>
    <property type="evidence" value="ECO:0000250"/>
    <property type="project" value="UniProtKB"/>
</dbReference>
<dbReference type="GO" id="GO:0005507">
    <property type="term" value="F:copper ion binding"/>
    <property type="evidence" value="ECO:0007669"/>
    <property type="project" value="InterPro"/>
</dbReference>
<dbReference type="GO" id="GO:0001968">
    <property type="term" value="F:fibronectin binding"/>
    <property type="evidence" value="ECO:0000314"/>
    <property type="project" value="UniProtKB"/>
</dbReference>
<dbReference type="GO" id="GO:0004720">
    <property type="term" value="F:protein-lysine 6-oxidase activity"/>
    <property type="evidence" value="ECO:0000314"/>
    <property type="project" value="UniProtKB"/>
</dbReference>
<dbReference type="GO" id="GO:0001837">
    <property type="term" value="P:epithelial to mesenchymal transition"/>
    <property type="evidence" value="ECO:0000250"/>
    <property type="project" value="UniProtKB"/>
</dbReference>
<dbReference type="GO" id="GO:1905590">
    <property type="term" value="P:fibronectin fibril organization"/>
    <property type="evidence" value="ECO:0000315"/>
    <property type="project" value="UniProtKB"/>
</dbReference>
<dbReference type="GO" id="GO:0006954">
    <property type="term" value="P:inflammatory response"/>
    <property type="evidence" value="ECO:0000315"/>
    <property type="project" value="UniProtKB"/>
</dbReference>
<dbReference type="GO" id="GO:0030324">
    <property type="term" value="P:lung development"/>
    <property type="evidence" value="ECO:0000315"/>
    <property type="project" value="UniProtKB"/>
</dbReference>
<dbReference type="GO" id="GO:0045892">
    <property type="term" value="P:negative regulation of DNA-templated transcription"/>
    <property type="evidence" value="ECO:0000250"/>
    <property type="project" value="UniProtKB"/>
</dbReference>
<dbReference type="GO" id="GO:2000329">
    <property type="term" value="P:negative regulation of T-helper 17 cell lineage commitment"/>
    <property type="evidence" value="ECO:0000315"/>
    <property type="project" value="UniProtKB"/>
</dbReference>
<dbReference type="GO" id="GO:0018057">
    <property type="term" value="P:peptidyl-lysine oxidation"/>
    <property type="evidence" value="ECO:0000314"/>
    <property type="project" value="UniProtKB"/>
</dbReference>
<dbReference type="GO" id="GO:2001046">
    <property type="term" value="P:positive regulation of integrin-mediated signaling pathway"/>
    <property type="evidence" value="ECO:0000315"/>
    <property type="project" value="UniProtKB"/>
</dbReference>
<dbReference type="GO" id="GO:0060021">
    <property type="term" value="P:roof of mouth development"/>
    <property type="evidence" value="ECO:0000315"/>
    <property type="project" value="UniProtKB"/>
</dbReference>
<dbReference type="GO" id="GO:0061053">
    <property type="term" value="P:somite development"/>
    <property type="evidence" value="ECO:0000315"/>
    <property type="project" value="UniProtKB"/>
</dbReference>
<dbReference type="GO" id="GO:0021510">
    <property type="term" value="P:spinal cord development"/>
    <property type="evidence" value="ECO:0000315"/>
    <property type="project" value="UniProtKB"/>
</dbReference>
<dbReference type="FunFam" id="3.10.250.10:FF:000001">
    <property type="entry name" value="Lysyl oxidase 4 isoform X1"/>
    <property type="match status" value="2"/>
</dbReference>
<dbReference type="FunFam" id="3.10.250.10:FF:000008">
    <property type="entry name" value="Lysyl oxidase homolog 2"/>
    <property type="match status" value="1"/>
</dbReference>
<dbReference type="FunFam" id="3.10.250.10:FF:000022">
    <property type="entry name" value="lysyl oxidase homolog 3 isoform X2"/>
    <property type="match status" value="1"/>
</dbReference>
<dbReference type="Gene3D" id="3.10.250.10">
    <property type="entry name" value="SRCR-like domain"/>
    <property type="match status" value="4"/>
</dbReference>
<dbReference type="InterPro" id="IPR050912">
    <property type="entry name" value="LOX-like_protein"/>
</dbReference>
<dbReference type="InterPro" id="IPR001695">
    <property type="entry name" value="Lysyl_oxidase"/>
</dbReference>
<dbReference type="InterPro" id="IPR019828">
    <property type="entry name" value="Lysyl_oxidase_CS"/>
</dbReference>
<dbReference type="InterPro" id="IPR001190">
    <property type="entry name" value="SRCR"/>
</dbReference>
<dbReference type="InterPro" id="IPR036772">
    <property type="entry name" value="SRCR-like_dom_sf"/>
</dbReference>
<dbReference type="PANTHER" id="PTHR45817:SF2">
    <property type="entry name" value="LYSYL OXIDASE HOMOLOG 3"/>
    <property type="match status" value="1"/>
</dbReference>
<dbReference type="PANTHER" id="PTHR45817">
    <property type="entry name" value="LYSYL OXIDASE-LIKE-RELATED"/>
    <property type="match status" value="1"/>
</dbReference>
<dbReference type="Pfam" id="PF01186">
    <property type="entry name" value="Lysyl_oxidase"/>
    <property type="match status" value="1"/>
</dbReference>
<dbReference type="Pfam" id="PF00530">
    <property type="entry name" value="SRCR"/>
    <property type="match status" value="4"/>
</dbReference>
<dbReference type="PRINTS" id="PR00074">
    <property type="entry name" value="LYSYLOXIDASE"/>
</dbReference>
<dbReference type="PRINTS" id="PR00258">
    <property type="entry name" value="SPERACTRCPTR"/>
</dbReference>
<dbReference type="SMART" id="SM00202">
    <property type="entry name" value="SR"/>
    <property type="match status" value="4"/>
</dbReference>
<dbReference type="SUPFAM" id="SSF56487">
    <property type="entry name" value="SRCR-like"/>
    <property type="match status" value="4"/>
</dbReference>
<dbReference type="PROSITE" id="PS00926">
    <property type="entry name" value="LYSYL_OXIDASE"/>
    <property type="match status" value="1"/>
</dbReference>
<dbReference type="PROSITE" id="PS00420">
    <property type="entry name" value="SRCR_1"/>
    <property type="match status" value="1"/>
</dbReference>
<dbReference type="PROSITE" id="PS50287">
    <property type="entry name" value="SRCR_2"/>
    <property type="match status" value="4"/>
</dbReference>
<feature type="signal peptide" evidence="4">
    <location>
        <begin position="1"/>
        <end position="26"/>
    </location>
</feature>
<feature type="chain" id="PRO_0000018534" description="Lysyl oxidase homolog 3">
    <location>
        <begin position="27"/>
        <end position="754"/>
    </location>
</feature>
<feature type="domain" description="SRCR 1" evidence="5">
    <location>
        <begin position="45"/>
        <end position="146"/>
    </location>
</feature>
<feature type="domain" description="SRCR 2" evidence="5">
    <location>
        <begin position="170"/>
        <end position="283"/>
    </location>
</feature>
<feature type="domain" description="SRCR 3" evidence="5">
    <location>
        <begin position="308"/>
        <end position="408"/>
    </location>
</feature>
<feature type="domain" description="SRCR 4" evidence="5">
    <location>
        <begin position="418"/>
        <end position="526"/>
    </location>
</feature>
<feature type="region of interest" description="Lysyl-oxidase like">
    <location>
        <begin position="530"/>
        <end position="733"/>
    </location>
</feature>
<feature type="binding site" evidence="4">
    <location>
        <position position="608"/>
    </location>
    <ligand>
        <name>Cu cation</name>
        <dbReference type="ChEBI" id="CHEBI:23378"/>
    </ligand>
</feature>
<feature type="binding site" evidence="4">
    <location>
        <position position="610"/>
    </location>
    <ligand>
        <name>Cu cation</name>
        <dbReference type="ChEBI" id="CHEBI:23378"/>
    </ligand>
</feature>
<feature type="binding site" evidence="4">
    <location>
        <position position="612"/>
    </location>
    <ligand>
        <name>Cu cation</name>
        <dbReference type="ChEBI" id="CHEBI:23378"/>
    </ligand>
</feature>
<feature type="modified residue" description="2',4',5'-topaquinone" evidence="2">
    <location>
        <position position="671"/>
    </location>
</feature>
<feature type="glycosylation site" description="N-linked (GlcNAc...) asparagine" evidence="4">
    <location>
        <position position="112"/>
    </location>
</feature>
<feature type="glycosylation site" description="N-linked (GlcNAc...) asparagine" evidence="4">
    <location>
        <position position="267"/>
    </location>
</feature>
<feature type="glycosylation site" description="N-linked (GlcNAc...) asparagine" evidence="4">
    <location>
        <position position="391"/>
    </location>
</feature>
<feature type="glycosylation site" description="N-linked (GlcNAc...) asparagine" evidence="4">
    <location>
        <position position="482"/>
    </location>
</feature>
<feature type="glycosylation site" description="N-linked (GlcNAc...) asparagine" evidence="4">
    <location>
        <position position="626"/>
    </location>
</feature>
<feature type="disulfide bond" evidence="5">
    <location>
        <begin position="71"/>
        <end position="135"/>
    </location>
</feature>
<feature type="disulfide bond" evidence="5">
    <location>
        <begin position="84"/>
        <end position="145"/>
    </location>
</feature>
<feature type="disulfide bond" evidence="5">
    <location>
        <begin position="115"/>
        <end position="125"/>
    </location>
</feature>
<feature type="disulfide bond" evidence="5">
    <location>
        <begin position="202"/>
        <end position="272"/>
    </location>
</feature>
<feature type="disulfide bond" evidence="5">
    <location>
        <begin position="215"/>
        <end position="282"/>
    </location>
</feature>
<feature type="disulfide bond" evidence="5">
    <location>
        <begin position="249"/>
        <end position="259"/>
    </location>
</feature>
<feature type="disulfide bond" evidence="5">
    <location>
        <begin position="333"/>
        <end position="397"/>
    </location>
</feature>
<feature type="disulfide bond" evidence="5">
    <location>
        <begin position="346"/>
        <end position="407"/>
    </location>
</feature>
<feature type="disulfide bond" evidence="5">
    <location>
        <begin position="377"/>
        <end position="387"/>
    </location>
</feature>
<feature type="disulfide bond" evidence="5">
    <location>
        <begin position="447"/>
        <end position="512"/>
    </location>
</feature>
<feature type="disulfide bond" evidence="5">
    <location>
        <begin position="460"/>
        <end position="525"/>
    </location>
</feature>
<feature type="disulfide bond" evidence="5">
    <location>
        <begin position="493"/>
        <end position="503"/>
    </location>
</feature>
<feature type="disulfide bond" evidence="5">
    <location>
        <begin position="555"/>
        <end position="561"/>
    </location>
</feature>
<feature type="disulfide bond" evidence="5">
    <location>
        <begin position="607"/>
        <end position="655"/>
    </location>
</feature>
<feature type="disulfide bond" evidence="5">
    <location>
        <begin position="639"/>
        <end position="645"/>
    </location>
</feature>
<feature type="disulfide bond" evidence="5">
    <location>
        <begin position="667"/>
        <end position="677"/>
    </location>
</feature>
<feature type="disulfide bond" evidence="5">
    <location>
        <begin position="714"/>
        <end position="728"/>
    </location>
</feature>
<feature type="cross-link" description="Lysine tyrosylquinone (Lys-Tyr)" evidence="2">
    <location>
        <begin position="635"/>
        <end position="671"/>
    </location>
</feature>
<feature type="sequence conflict" description="In Ref. 1; AAC83205." evidence="12" ref="1">
    <original>R</original>
    <variation>P</variation>
    <location>
        <position position="347"/>
    </location>
</feature>
<sequence>MRAVSVWYCCPWGLLLLHCLCSFSVGSPSPSISPEKKVGSQGLRFRLAGFPRKPYEGRVEIQRAGEWGTICDDDFTLQAAHVLCRELGFTEATGWTHSAKYGPGTGRIWLDNLSCRGTEGSVTECASRGWGNSDCTHDEDAGVICKDQRLPGFSDSNVIEVEHQLQVEEVRLRPAVEWGRRPLPVTEGLVEVRLPEGWSQVCDKGWSAHNSHVVCGMLGFPGEKRVNMAFYRMLAQKKQHSFGLHSVACVGTEAHLSLCSLEFYRANDTTRCSGGNPAVVSCVLGPLYATFTGQKKQQHSKPQGEARVRLKGGAHQGEGRVEVLKAGTWGTVCDRKWDLQAASVVCRELGFGTAREALSGARMGQGMGAIHLSEVRCSGQEPSLWRCPSKNITAEDCSHSQDAGVRCNLPYTGVETKIRLSGGRSRYEGRVEVQIGIPGHLRWGLICGDDWGTLEAMVACRQLGLGYANHGLQETWYWDSGNVTEVVMSGVRCTGSELSLNQCAHHSSHITCKKTGTRFTAGVICSETASDLLLHSALVQETAYIEDRPLHMLYCAAEENCLASSARSANWPYGHRRLLRFSSQIHNLGRADFRPKAGRHSWVWHECHGHYHSMDIFTHYDILTPNGTKVAEGHKASFCLEDTECQEDVSKRYECANFGEQGITVGCWDLYRHDIDCQWIDITDVKPGNYILQVVINPNFEVAESDFTNNAMKCNCKYDGHRIWVHNCHIGDAFSEEANRRFERYPGQTSNQIV</sequence>
<organism>
    <name type="scientific">Mus musculus</name>
    <name type="common">Mouse</name>
    <dbReference type="NCBI Taxonomy" id="10090"/>
    <lineage>
        <taxon>Eukaryota</taxon>
        <taxon>Metazoa</taxon>
        <taxon>Chordata</taxon>
        <taxon>Craniata</taxon>
        <taxon>Vertebrata</taxon>
        <taxon>Euteleostomi</taxon>
        <taxon>Mammalia</taxon>
        <taxon>Eutheria</taxon>
        <taxon>Euarchontoglires</taxon>
        <taxon>Glires</taxon>
        <taxon>Rodentia</taxon>
        <taxon>Myomorpha</taxon>
        <taxon>Muroidea</taxon>
        <taxon>Muridae</taxon>
        <taxon>Murinae</taxon>
        <taxon>Mus</taxon>
        <taxon>Mus</taxon>
    </lineage>
</organism>
<proteinExistence type="evidence at protein level"/>
<keyword id="KW-0186">Copper</keyword>
<keyword id="KW-0963">Cytoplasm</keyword>
<keyword id="KW-1015">Disulfide bond</keyword>
<keyword id="KW-0325">Glycoprotein</keyword>
<keyword id="KW-0886">LTQ</keyword>
<keyword id="KW-0479">Metal-binding</keyword>
<keyword id="KW-0539">Nucleus</keyword>
<keyword id="KW-0560">Oxidoreductase</keyword>
<keyword id="KW-1185">Reference proteome</keyword>
<keyword id="KW-0677">Repeat</keyword>
<keyword id="KW-0964">Secreted</keyword>
<keyword id="KW-0732">Signal</keyword>
<keyword id="KW-0801">TPQ</keyword>
<accession>Q9Z175</accession>
<accession>Q91VN8</accession>
<accession>Q9JJ39</accession>
<protein>
    <recommendedName>
        <fullName evidence="12">Lysyl oxidase homolog 3</fullName>
        <ecNumber evidence="3">1.4.3.-</ecNumber>
        <ecNumber evidence="3">1.4.3.13</ecNumber>
    </recommendedName>
    <alternativeName>
        <fullName evidence="10">Lysyl oxidase-like protein 3</fullName>
    </alternativeName>
    <alternativeName>
        <fullName evidence="11">Lysyl oxidase-related protein 2</fullName>
    </alternativeName>
</protein>
<evidence type="ECO:0000250" key="1">
    <source>
        <dbReference type="UniProtKB" id="P16636"/>
    </source>
</evidence>
<evidence type="ECO:0000250" key="2">
    <source>
        <dbReference type="UniProtKB" id="P33072"/>
    </source>
</evidence>
<evidence type="ECO:0000250" key="3">
    <source>
        <dbReference type="UniProtKB" id="P58215"/>
    </source>
</evidence>
<evidence type="ECO:0000255" key="4"/>
<evidence type="ECO:0000255" key="5">
    <source>
        <dbReference type="PROSITE-ProRule" id="PRU00196"/>
    </source>
</evidence>
<evidence type="ECO:0000269" key="6">
    <source>
    </source>
</evidence>
<evidence type="ECO:0000269" key="7">
    <source>
    </source>
</evidence>
<evidence type="ECO:0000269" key="8">
    <source>
    </source>
</evidence>
<evidence type="ECO:0000269" key="9">
    <source>
    </source>
</evidence>
<evidence type="ECO:0000303" key="10">
    <source>
    </source>
</evidence>
<evidence type="ECO:0000303" key="11">
    <source>
    </source>
</evidence>
<evidence type="ECO:0000305" key="12"/>
<evidence type="ECO:0000312" key="13">
    <source>
        <dbReference type="MGI" id="MGI:1337004"/>
    </source>
</evidence>
<comment type="function">
    <text evidence="3 6 7 9">Protein-lysine 6-oxidase that mediates the oxidation of peptidyl lysine residues to allysine in target proteins (PubMed:26954549). Catalyzes the post-translational oxidative deamination of peptidyl lysine residues in precursors of elastin and different types of collagens, a prerequisite in the formation of cross-links between collagens and elastin (PubMed:26307084). Required for somite boundary formation by catalyzing oxidation of fibronectin (FN1), enhancing integrin signaling in myofibers and their adhesion to the myotendinous junction (MTJ) (PubMed:26954549). Acts as a regulator of inflammatory response by inhibiting differentiation of naive CD4(+) T-cells into T-helper Th17 or regulatory T-cells (Treg): acts by interacting with STAT3 in the nucleus and catalyzing both deacetylation and oxidation of lysine residues on STAT3, leading to disrupt STAT3 dimerization and inhibit STAT3 transcription activity (PubMed:28065600). Oxidation of lysine residues to allysine on STAT3 preferentially takes place on lysine residues that are acetylated (By similarity). Also able to catalyze deacetylation of lysine residues on STAT3 (By similarity).</text>
</comment>
<comment type="catalytic activity">
    <reaction evidence="3">
        <text>L-lysyl-[protein] + O2 + H2O = (S)-2-amino-6-oxohexanoyl-[protein] + H2O2 + NH4(+)</text>
        <dbReference type="Rhea" id="RHEA:24544"/>
        <dbReference type="Rhea" id="RHEA-COMP:9752"/>
        <dbReference type="Rhea" id="RHEA-COMP:12448"/>
        <dbReference type="ChEBI" id="CHEBI:15377"/>
        <dbReference type="ChEBI" id="CHEBI:15379"/>
        <dbReference type="ChEBI" id="CHEBI:16240"/>
        <dbReference type="ChEBI" id="CHEBI:28938"/>
        <dbReference type="ChEBI" id="CHEBI:29969"/>
        <dbReference type="ChEBI" id="CHEBI:131803"/>
        <dbReference type="EC" id="1.4.3.13"/>
    </reaction>
</comment>
<comment type="catalytic activity">
    <reaction evidence="3">
        <text>N(6)-acetyl-L-lysyl-[protein] + O2 + H2O = acetamide + (S)-2-amino-6-oxohexanoyl-[protein] + H2O2</text>
        <dbReference type="Rhea" id="RHEA:51648"/>
        <dbReference type="Rhea" id="RHEA-COMP:10731"/>
        <dbReference type="Rhea" id="RHEA-COMP:12448"/>
        <dbReference type="ChEBI" id="CHEBI:15377"/>
        <dbReference type="ChEBI" id="CHEBI:15379"/>
        <dbReference type="ChEBI" id="CHEBI:16240"/>
        <dbReference type="ChEBI" id="CHEBI:27856"/>
        <dbReference type="ChEBI" id="CHEBI:61930"/>
        <dbReference type="ChEBI" id="CHEBI:131803"/>
    </reaction>
</comment>
<comment type="cofactor">
    <cofactor evidence="1">
        <name>Cu cation</name>
        <dbReference type="ChEBI" id="CHEBI:23378"/>
    </cofactor>
</comment>
<comment type="cofactor">
    <cofactor evidence="2">
        <name>lysine tyrosylquinone residue</name>
        <dbReference type="ChEBI" id="CHEBI:20489"/>
    </cofactor>
    <text evidence="2">Contains 1 lysine tyrosylquinone.</text>
</comment>
<comment type="subcellular location">
    <subcellularLocation>
        <location evidence="7">Secreted</location>
        <location evidence="7">Extracellular space</location>
    </subcellularLocation>
    <subcellularLocation>
        <location evidence="3">Cytoplasm</location>
    </subcellularLocation>
    <subcellularLocation>
        <location evidence="3">Nucleus</location>
    </subcellularLocation>
    <text evidence="3">It is unclear how LOXL3 is both intracellular (cytoplasmic and nuclear) and extracellular: it contains a clear signal sequence and is predicted to localize in the extracellular medium. However, the intracellular location is clearly reported and at least another protein of the family (LOXL2) also has intracellular and extracellular localization despite the presence of a signal sequence.</text>
</comment>
<comment type="tissue specificity">
    <text evidence="6 7 8">Expressed in palate: predominantly present in the palate mesenchyme and tongue (at protein level) (PubMed:26307084). In spine, expressed in the original intervertebral disk, cartilage primordia, anterior and posterior longitudinal ligaments, meninges of spinal cord, lung and heart (PubMed:26307084). In eyes, strongly expressed in the skin of the eyelid and weakly expressed in the cornea and sclera (PubMed:26307084). In lung, predominantly expressed in the pulmonary mesenchyme (PubMed:27645581). In developing muscle, expressed at myofiber ends (at protein level) (PubMed:26954549).</text>
</comment>
<comment type="PTM">
    <text evidence="2">The lysine tyrosylquinone cross-link (LTQ) is generated by condensation of the epsilon-amino group of a lysine with a topaquinone produced by oxidation of tyrosine.</text>
</comment>
<comment type="disruption phenotype">
    <text evidence="6 7 8 9">Perinatal lethality, due to impaired development of the palate shelves and abnormalities in the cartilage primordia of the thoracic vertebrae (PubMed:26307084, PubMed:26954549). Cleft palates and spinal deformities are caused by the decreased collagen cross-links in the palate and spine (PubMed:26307084). In addition, mice display a reduction in the saccular space in the lungs at 18.5 dpc (PubMed:26307084, PubMed:27645581). Lungs also show reduced lung volumes and weights and deformed and smaller thoracic cavities (PubMed:27645581). Excess elastic fibers are detected, possibly due to an increased expression of Loxl4 (PubMed:27645581). Embryos show defects in the somitic boundaries, due to defects in myofibers that anchor prematurely or overshoot to adjacent somites, and lack tension (PubMed:26954549). Splenocytes show increased number of T-cells into T-helper Th17 cells and constitutive acetylation of Stat3 (PubMed:28065600).</text>
</comment>
<comment type="similarity">
    <text evidence="12">Belongs to the lysyl oxidase family.</text>
</comment>